<accession>B8DFM9</accession>
<gene>
    <name evidence="1" type="primary">recX</name>
    <name type="ordered locus">LMHCC_0871</name>
</gene>
<dbReference type="EMBL" id="CP001175">
    <property type="protein sequence ID" value="ACK39222.1"/>
    <property type="molecule type" value="Genomic_DNA"/>
</dbReference>
<dbReference type="RefSeq" id="WP_012581191.1">
    <property type="nucleotide sequence ID" value="NC_011660.1"/>
</dbReference>
<dbReference type="SMR" id="B8DFM9"/>
<dbReference type="KEGG" id="lmh:LMHCC_0871"/>
<dbReference type="HOGENOM" id="CLU_066607_4_0_9"/>
<dbReference type="GO" id="GO:0005737">
    <property type="term" value="C:cytoplasm"/>
    <property type="evidence" value="ECO:0007669"/>
    <property type="project" value="UniProtKB-SubCell"/>
</dbReference>
<dbReference type="GO" id="GO:0006282">
    <property type="term" value="P:regulation of DNA repair"/>
    <property type="evidence" value="ECO:0007669"/>
    <property type="project" value="UniProtKB-UniRule"/>
</dbReference>
<dbReference type="Gene3D" id="1.10.10.10">
    <property type="entry name" value="Winged helix-like DNA-binding domain superfamily/Winged helix DNA-binding domain"/>
    <property type="match status" value="4"/>
</dbReference>
<dbReference type="HAMAP" id="MF_01114">
    <property type="entry name" value="RecX"/>
    <property type="match status" value="1"/>
</dbReference>
<dbReference type="InterPro" id="IPR053926">
    <property type="entry name" value="RecX_HTH_1st"/>
</dbReference>
<dbReference type="InterPro" id="IPR053924">
    <property type="entry name" value="RecX_HTH_2nd"/>
</dbReference>
<dbReference type="InterPro" id="IPR053925">
    <property type="entry name" value="RecX_HTH_3rd"/>
</dbReference>
<dbReference type="InterPro" id="IPR003783">
    <property type="entry name" value="Regulatory_RecX"/>
</dbReference>
<dbReference type="InterPro" id="IPR036388">
    <property type="entry name" value="WH-like_DNA-bd_sf"/>
</dbReference>
<dbReference type="NCBIfam" id="NF010733">
    <property type="entry name" value="PRK14135.1"/>
    <property type="match status" value="1"/>
</dbReference>
<dbReference type="PANTHER" id="PTHR33602">
    <property type="entry name" value="REGULATORY PROTEIN RECX FAMILY PROTEIN"/>
    <property type="match status" value="1"/>
</dbReference>
<dbReference type="PANTHER" id="PTHR33602:SF1">
    <property type="entry name" value="REGULATORY PROTEIN RECX FAMILY PROTEIN"/>
    <property type="match status" value="1"/>
</dbReference>
<dbReference type="Pfam" id="PF21982">
    <property type="entry name" value="RecX_HTH1"/>
    <property type="match status" value="1"/>
</dbReference>
<dbReference type="Pfam" id="PF02631">
    <property type="entry name" value="RecX_HTH2"/>
    <property type="match status" value="1"/>
</dbReference>
<dbReference type="Pfam" id="PF21981">
    <property type="entry name" value="RecX_HTH3"/>
    <property type="match status" value="1"/>
</dbReference>
<feature type="chain" id="PRO_1000164019" description="Regulatory protein RecX">
    <location>
        <begin position="1"/>
        <end position="269"/>
    </location>
</feature>
<protein>
    <recommendedName>
        <fullName evidence="1">Regulatory protein RecX</fullName>
    </recommendedName>
</protein>
<keyword id="KW-0963">Cytoplasm</keyword>
<evidence type="ECO:0000255" key="1">
    <source>
        <dbReference type="HAMAP-Rule" id="MF_01114"/>
    </source>
</evidence>
<sequence length="269" mass="31366">MKITSISVQQKNKERYNIFIDEKYNFSVDEEVLARYQLMKGKALTEAEIEEIKQADMVRKGLNKAINFLSHRVRSEKEIRDYLKKQEMEAFAIDEILKKLADMDYINDLEFAELYTKTQIKTTLKGPRTIERELVEKGLTREIISQVIEEYSDEAQLENATKQAIKIMKRNNKSAKKMLQQKIITDLIQKGYTSELAKTAATEATSEIDIADEADILQKQVEKTMRKNKRYKPSIAKQKTITSLMQKGFSYDTIQSYLTENEISFEEEE</sequence>
<comment type="function">
    <text evidence="1">Modulates RecA activity.</text>
</comment>
<comment type="subcellular location">
    <subcellularLocation>
        <location evidence="1">Cytoplasm</location>
    </subcellularLocation>
</comment>
<comment type="similarity">
    <text evidence="1">Belongs to the RecX family.</text>
</comment>
<reference key="1">
    <citation type="journal article" date="2011" name="J. Bacteriol.">
        <title>Genome sequence of lineage III Listeria monocytogenes strain HCC23.</title>
        <authorList>
            <person name="Steele C.L."/>
            <person name="Donaldson J.R."/>
            <person name="Paul D."/>
            <person name="Banes M.M."/>
            <person name="Arick T."/>
            <person name="Bridges S.M."/>
            <person name="Lawrence M.L."/>
        </authorList>
    </citation>
    <scope>NUCLEOTIDE SEQUENCE [LARGE SCALE GENOMIC DNA]</scope>
    <source>
        <strain>HCC23</strain>
    </source>
</reference>
<proteinExistence type="inferred from homology"/>
<organism>
    <name type="scientific">Listeria monocytogenes serotype 4a (strain HCC23)</name>
    <dbReference type="NCBI Taxonomy" id="552536"/>
    <lineage>
        <taxon>Bacteria</taxon>
        <taxon>Bacillati</taxon>
        <taxon>Bacillota</taxon>
        <taxon>Bacilli</taxon>
        <taxon>Bacillales</taxon>
        <taxon>Listeriaceae</taxon>
        <taxon>Listeria</taxon>
    </lineage>
</organism>
<name>RECX_LISMH</name>